<reference key="1">
    <citation type="journal article" date="1995" name="Microbiology">
        <title>The nucleotide sequence of the Tn5271 3-chlorobenzoate 3,4-dioxygenase genes (cbaAB) unites the class IA oxygenases in a single lineage.</title>
        <authorList>
            <person name="Nakatsu C.H."/>
            <person name="Straus N.A."/>
            <person name="Wyndham R.C."/>
        </authorList>
    </citation>
    <scope>NUCLEOTIDE SEQUENCE [GENOMIC DNA]</scope>
    <source>
        <strain>BR60 / Isolate Bloody Run creek</strain>
        <transposon>Tn5271</transposon>
    </source>
</reference>
<reference key="2">
    <citation type="submission" date="2000-08" db="EMBL/GenBank/DDBJ databases">
        <authorList>
            <person name="Wyndham R.C."/>
        </authorList>
    </citation>
    <scope>SEQUENCE REVISION</scope>
</reference>
<organism>
    <name type="scientific">Comamonas testosteroni</name>
    <name type="common">Pseudomonas testosteroni</name>
    <dbReference type="NCBI Taxonomy" id="285"/>
    <lineage>
        <taxon>Bacteria</taxon>
        <taxon>Pseudomonadati</taxon>
        <taxon>Pseudomonadota</taxon>
        <taxon>Betaproteobacteria</taxon>
        <taxon>Burkholderiales</taxon>
        <taxon>Comamonadaceae</taxon>
        <taxon>Comamonas</taxon>
    </lineage>
</organism>
<evidence type="ECO:0000250" key="1"/>
<evidence type="ECO:0000255" key="2">
    <source>
        <dbReference type="PROSITE-ProRule" id="PRU00465"/>
    </source>
</evidence>
<evidence type="ECO:0000255" key="3">
    <source>
        <dbReference type="PROSITE-ProRule" id="PRU00716"/>
    </source>
</evidence>
<evidence type="ECO:0000305" key="4"/>
<sequence>MVAIDQHDTYSVRVISRSHLSKDIVQVELEESSQRPLPDYEPGSHVDIYVQDDLVRQYSLVKASDAQASYQIAFKVKRDQGSATELMCELLRVGATTRISAPRNAFALDPQARETVLICGGIGITPMVHMAMTLVKAKRPWSMHIASRDGDELDLLGPLGSCSEISRYISSQGDRLPIRDLAERAPANAHLYFCGPEGMLQEFLAATQHRDPATVHYEQFQAAPSTGNEFTVNLARSGAQYVVREGETILDVLRNAGHHVTSSCRQGICGMCETTLISGVPDHRDRLLTDSEKASGRTMLICCSRALSPELTLDL</sequence>
<keyword id="KW-0001">2Fe-2S</keyword>
<keyword id="KW-0058">Aromatic hydrocarbons catabolism</keyword>
<keyword id="KW-0249">Electron transport</keyword>
<keyword id="KW-0285">Flavoprotein</keyword>
<keyword id="KW-0288">FMN</keyword>
<keyword id="KW-0408">Iron</keyword>
<keyword id="KW-0411">Iron-sulfur</keyword>
<keyword id="KW-0479">Metal-binding</keyword>
<keyword id="KW-0520">NAD</keyword>
<keyword id="KW-0560">Oxidoreductase</keyword>
<keyword id="KW-0813">Transport</keyword>
<proteinExistence type="inferred from homology"/>
<comment type="cofactor">
    <cofactor evidence="1">
        <name>FMN</name>
        <dbReference type="ChEBI" id="CHEBI:58210"/>
    </cofactor>
</comment>
<comment type="subunit">
    <text>This dioxygenase system consists of two proteins: phthalate oxygenase and phthalate oxygenase reductase.</text>
</comment>
<comment type="similarity">
    <text evidence="4">Belongs to the PDR/VanB family.</text>
</comment>
<dbReference type="EC" id="1.14.-.-"/>
<dbReference type="EMBL" id="U18133">
    <property type="protein sequence ID" value="AAC45717.2"/>
    <property type="molecule type" value="Genomic_DNA"/>
</dbReference>
<dbReference type="SMR" id="Q44257"/>
<dbReference type="BioCyc" id="MetaCyc:MONOMER-14757"/>
<dbReference type="GO" id="GO:0051537">
    <property type="term" value="F:2 iron, 2 sulfur cluster binding"/>
    <property type="evidence" value="ECO:0007669"/>
    <property type="project" value="UniProtKB-KW"/>
</dbReference>
<dbReference type="GO" id="GO:0046872">
    <property type="term" value="F:metal ion binding"/>
    <property type="evidence" value="ECO:0007669"/>
    <property type="project" value="UniProtKB-KW"/>
</dbReference>
<dbReference type="GO" id="GO:0016491">
    <property type="term" value="F:oxidoreductase activity"/>
    <property type="evidence" value="ECO:0007669"/>
    <property type="project" value="UniProtKB-KW"/>
</dbReference>
<dbReference type="GO" id="GO:0009056">
    <property type="term" value="P:catabolic process"/>
    <property type="evidence" value="ECO:0007669"/>
    <property type="project" value="UniProtKB-KW"/>
</dbReference>
<dbReference type="CDD" id="cd00207">
    <property type="entry name" value="fer2"/>
    <property type="match status" value="1"/>
</dbReference>
<dbReference type="CDD" id="cd06185">
    <property type="entry name" value="PDR_like"/>
    <property type="match status" value="1"/>
</dbReference>
<dbReference type="Gene3D" id="3.10.20.30">
    <property type="match status" value="1"/>
</dbReference>
<dbReference type="Gene3D" id="3.40.50.80">
    <property type="entry name" value="Nucleotide-binding domain of ferredoxin-NADP reductase (FNR) module"/>
    <property type="match status" value="1"/>
</dbReference>
<dbReference type="Gene3D" id="2.40.30.10">
    <property type="entry name" value="Translation factors"/>
    <property type="match status" value="1"/>
</dbReference>
<dbReference type="InterPro" id="IPR036010">
    <property type="entry name" value="2Fe-2S_ferredoxin-like_sf"/>
</dbReference>
<dbReference type="InterPro" id="IPR001041">
    <property type="entry name" value="2Fe-2S_ferredoxin-type"/>
</dbReference>
<dbReference type="InterPro" id="IPR006058">
    <property type="entry name" value="2Fe2S_fd_BS"/>
</dbReference>
<dbReference type="InterPro" id="IPR052353">
    <property type="entry name" value="Benzoxazolinone_Detox_Enz"/>
</dbReference>
<dbReference type="InterPro" id="IPR012675">
    <property type="entry name" value="Beta-grasp_dom_sf"/>
</dbReference>
<dbReference type="InterPro" id="IPR008333">
    <property type="entry name" value="Cbr1-like_FAD-bd_dom"/>
</dbReference>
<dbReference type="InterPro" id="IPR017927">
    <property type="entry name" value="FAD-bd_FR_type"/>
</dbReference>
<dbReference type="InterPro" id="IPR039261">
    <property type="entry name" value="FNR_nucleotide-bd"/>
</dbReference>
<dbReference type="InterPro" id="IPR017938">
    <property type="entry name" value="Riboflavin_synthase-like_b-brl"/>
</dbReference>
<dbReference type="PANTHER" id="PTHR30212">
    <property type="entry name" value="PROTEIN YIIM"/>
    <property type="match status" value="1"/>
</dbReference>
<dbReference type="PANTHER" id="PTHR30212:SF2">
    <property type="entry name" value="PROTEIN YIIM"/>
    <property type="match status" value="1"/>
</dbReference>
<dbReference type="Pfam" id="PF00970">
    <property type="entry name" value="FAD_binding_6"/>
    <property type="match status" value="1"/>
</dbReference>
<dbReference type="Pfam" id="PF00111">
    <property type="entry name" value="Fer2"/>
    <property type="match status" value="1"/>
</dbReference>
<dbReference type="PRINTS" id="PR00409">
    <property type="entry name" value="PHDIOXRDTASE"/>
</dbReference>
<dbReference type="SUPFAM" id="SSF54292">
    <property type="entry name" value="2Fe-2S ferredoxin-like"/>
    <property type="match status" value="1"/>
</dbReference>
<dbReference type="SUPFAM" id="SSF52343">
    <property type="entry name" value="Ferredoxin reductase-like, C-terminal NADP-linked domain"/>
    <property type="match status" value="1"/>
</dbReference>
<dbReference type="SUPFAM" id="SSF63380">
    <property type="entry name" value="Riboflavin synthase domain-like"/>
    <property type="match status" value="1"/>
</dbReference>
<dbReference type="PROSITE" id="PS00197">
    <property type="entry name" value="2FE2S_FER_1"/>
    <property type="match status" value="1"/>
</dbReference>
<dbReference type="PROSITE" id="PS51085">
    <property type="entry name" value="2FE2S_FER_2"/>
    <property type="match status" value="1"/>
</dbReference>
<dbReference type="PROSITE" id="PS51384">
    <property type="entry name" value="FAD_FR"/>
    <property type="match status" value="1"/>
</dbReference>
<name>CBAB_COMTE</name>
<protein>
    <recommendedName>
        <fullName>3-chlorobenzoate-3,4-dioxygenase reductase subunit</fullName>
        <ecNumber>1.14.-.-</ecNumber>
    </recommendedName>
</protein>
<gene>
    <name type="primary">cbaB</name>
</gene>
<accession>Q44257</accession>
<accession>O08106</accession>
<feature type="chain" id="PRO_0000189395" description="3-chlorobenzoate-3,4-dioxygenase reductase subunit">
    <location>
        <begin position="1"/>
        <end position="315"/>
    </location>
</feature>
<feature type="domain" description="FAD-binding FR-type" evidence="3">
    <location>
        <begin position="7"/>
        <end position="109"/>
    </location>
</feature>
<feature type="domain" description="2Fe-2S ferredoxin-type" evidence="2">
    <location>
        <begin position="228"/>
        <end position="315"/>
    </location>
</feature>
<feature type="binding site" evidence="1">
    <location>
        <begin position="1"/>
        <end position="103"/>
    </location>
    <ligand>
        <name>FMN</name>
        <dbReference type="ChEBI" id="CHEBI:58210"/>
    </ligand>
</feature>
<feature type="binding site" evidence="2">
    <location>
        <position position="264"/>
    </location>
    <ligand>
        <name>[2Fe-2S] cluster</name>
        <dbReference type="ChEBI" id="CHEBI:190135"/>
    </ligand>
</feature>
<feature type="binding site" evidence="2">
    <location>
        <position position="269"/>
    </location>
    <ligand>
        <name>[2Fe-2S] cluster</name>
        <dbReference type="ChEBI" id="CHEBI:190135"/>
    </ligand>
</feature>
<feature type="binding site" evidence="2">
    <location>
        <position position="272"/>
    </location>
    <ligand>
        <name>[2Fe-2S] cluster</name>
        <dbReference type="ChEBI" id="CHEBI:190135"/>
    </ligand>
</feature>
<feature type="binding site" evidence="2">
    <location>
        <position position="302"/>
    </location>
    <ligand>
        <name>[2Fe-2S] cluster</name>
        <dbReference type="ChEBI" id="CHEBI:190135"/>
    </ligand>
</feature>